<evidence type="ECO:0000255" key="1">
    <source>
        <dbReference type="PROSITE-ProRule" id="PRU00625"/>
    </source>
</evidence>
<evidence type="ECO:0000256" key="2">
    <source>
        <dbReference type="SAM" id="MobiDB-lite"/>
    </source>
</evidence>
<evidence type="ECO:0000269" key="3">
    <source>
    </source>
</evidence>
<evidence type="ECO:0000269" key="4">
    <source>
    </source>
</evidence>
<evidence type="ECO:0000269" key="5">
    <source>
    </source>
</evidence>
<evidence type="ECO:0000269" key="6">
    <source>
    </source>
</evidence>
<evidence type="ECO:0000269" key="7">
    <source>
    </source>
</evidence>
<evidence type="ECO:0000269" key="8">
    <source>
    </source>
</evidence>
<evidence type="ECO:0000269" key="9">
    <source>
    </source>
</evidence>
<evidence type="ECO:0000269" key="10">
    <source>
    </source>
</evidence>
<evidence type="ECO:0000269" key="11">
    <source>
    </source>
</evidence>
<evidence type="ECO:0000269" key="12">
    <source>
    </source>
</evidence>
<evidence type="ECO:0000303" key="13">
    <source>
    </source>
</evidence>
<evidence type="ECO:0000305" key="14"/>
<evidence type="ECO:0000312" key="15">
    <source>
        <dbReference type="EMBL" id="BAC84294.1"/>
    </source>
</evidence>
<evidence type="ECO:0000312" key="16">
    <source>
        <dbReference type="EMBL" id="BAD30836.1"/>
    </source>
</evidence>
<evidence type="ECO:0000312" key="17">
    <source>
        <dbReference type="EMBL" id="BAF21429.2"/>
    </source>
</evidence>
<evidence type="ECO:0007829" key="18">
    <source>
        <dbReference type="PDB" id="7D3Y"/>
    </source>
</evidence>
<evidence type="ECO:0007829" key="19">
    <source>
        <dbReference type="PDB" id="7E40"/>
    </source>
</evidence>
<organism>
    <name type="scientific">Oryza sativa subsp. japonica</name>
    <name type="common">Rice</name>
    <dbReference type="NCBI Taxonomy" id="39947"/>
    <lineage>
        <taxon>Eukaryota</taxon>
        <taxon>Viridiplantae</taxon>
        <taxon>Streptophyta</taxon>
        <taxon>Embryophyta</taxon>
        <taxon>Tracheophyta</taxon>
        <taxon>Spermatophyta</taxon>
        <taxon>Magnoliopsida</taxon>
        <taxon>Liliopsida</taxon>
        <taxon>Poales</taxon>
        <taxon>Poaceae</taxon>
        <taxon>BOP clade</taxon>
        <taxon>Oryzoideae</taxon>
        <taxon>Oryzeae</taxon>
        <taxon>Oryzinae</taxon>
        <taxon>Oryza</taxon>
        <taxon>Oryza sativa</taxon>
    </lineage>
</organism>
<protein>
    <recommendedName>
        <fullName evidence="13">Protein PHOSPHATE STARVATION RESPONSE 2</fullName>
        <shortName evidence="13">OsPHR2</shortName>
    </recommendedName>
</protein>
<gene>
    <name evidence="13" type="primary">PHR2</name>
    <name evidence="17" type="ordered locus">Os07g0438800</name>
    <name evidence="14" type="ordered locus">LOC_Os07g25710</name>
    <name evidence="16" type="ORF">OSJNBa0026I22.19</name>
    <name evidence="15" type="ORF">P0443H10.4</name>
</gene>
<keyword id="KW-0002">3D-structure</keyword>
<keyword id="KW-0963">Cytoplasm</keyword>
<keyword id="KW-0238">DNA-binding</keyword>
<keyword id="KW-0539">Nucleus</keyword>
<keyword id="KW-1185">Reference proteome</keyword>
<keyword id="KW-0804">Transcription</keyword>
<keyword id="KW-0805">Transcription regulation</keyword>
<sequence>MERISTNQLYNSGIPVTVPSPLPAIPATLDENIPRIPDGQNVPRERELRSTPMPPHQNQSTVAPLHGHFQSSTGSVGPLRSSQAIRFSSVSSNEQYTNANPYNSQPPSSGSSSTLNYGSQYGGFEPSLTDFPRDAGPTWCPDPVDGLLGYTDDVPAGNNLTENSSIAAGDELAKQSEWWNDFMNYDWKDIDNTACTETQPQVGPAAQSSVAVHQSAAQQSVSSQSGEPSAVAIPSPSGASNTSNSKTRMRWTPELHERFVDAVNLLGGSEKATPKGVLKLMKADNLTIYHVKSHLQKYRTARYRPELSEGSSEKKAASKEDIPSIDLKGGNFDLTEALRLQLELQKRLHEQLEIQRSLQLRIEEQGKCLQMMLEQQCIPGTDKAVDASTSAEGTKPSSDLPESSAVKDVPENSQNGIAKQTESGDR</sequence>
<accession>Q6Z156</accession>
<accession>B9FWZ1</accession>
<reference key="1">
    <citation type="journal article" date="2008" name="Plant Physiol.">
        <title>OsPHR2 is involved in phosphate-starvation signaling and excessive phosphate accumulation in shoots of plants.</title>
        <authorList>
            <person name="Zhou J."/>
            <person name="Jiao F."/>
            <person name="Wu Z."/>
            <person name="Li Y."/>
            <person name="Wang X."/>
            <person name="He X."/>
            <person name="Zhong W."/>
            <person name="Wu P."/>
        </authorList>
    </citation>
    <scope>NUCLEOTIDE SEQUENCE [MRNA]</scope>
    <scope>TISSUE SPECIFICITY</scope>
    <scope>LACK OF INDUCTION BY PHOSPHATE</scope>
    <scope>SUBCELLULAR LOCATION</scope>
    <scope>FUNCTION</scope>
</reference>
<reference key="2">
    <citation type="journal article" date="2005" name="Nature">
        <title>The map-based sequence of the rice genome.</title>
        <authorList>
            <consortium name="International rice genome sequencing project (IRGSP)"/>
        </authorList>
    </citation>
    <scope>NUCLEOTIDE SEQUENCE [LARGE SCALE GENOMIC DNA]</scope>
    <source>
        <strain>cv. Nipponbare</strain>
    </source>
</reference>
<reference key="3">
    <citation type="journal article" date="2008" name="Nucleic Acids Res.">
        <title>The rice annotation project database (RAP-DB): 2008 update.</title>
        <authorList>
            <consortium name="The rice annotation project (RAP)"/>
        </authorList>
    </citation>
    <scope>GENOME REANNOTATION</scope>
    <source>
        <strain>cv. Nipponbare</strain>
    </source>
</reference>
<reference key="4">
    <citation type="journal article" date="2013" name="Rice">
        <title>Improvement of the Oryza sativa Nipponbare reference genome using next generation sequence and optical map data.</title>
        <authorList>
            <person name="Kawahara Y."/>
            <person name="de la Bastide M."/>
            <person name="Hamilton J.P."/>
            <person name="Kanamori H."/>
            <person name="McCombie W.R."/>
            <person name="Ouyang S."/>
            <person name="Schwartz D.C."/>
            <person name="Tanaka T."/>
            <person name="Wu J."/>
            <person name="Zhou S."/>
            <person name="Childs K.L."/>
            <person name="Davidson R.M."/>
            <person name="Lin H."/>
            <person name="Quesada-Ocampo L."/>
            <person name="Vaillancourt B."/>
            <person name="Sakai H."/>
            <person name="Lee S.S."/>
            <person name="Kim J."/>
            <person name="Numa H."/>
            <person name="Itoh T."/>
            <person name="Buell C.R."/>
            <person name="Matsumoto T."/>
        </authorList>
    </citation>
    <scope>GENOME REANNOTATION</scope>
    <source>
        <strain>cv. Nipponbare</strain>
    </source>
</reference>
<reference key="5">
    <citation type="journal article" date="2005" name="PLoS Biol.">
        <title>The genomes of Oryza sativa: a history of duplications.</title>
        <authorList>
            <person name="Yu J."/>
            <person name="Wang J."/>
            <person name="Lin W."/>
            <person name="Li S."/>
            <person name="Li H."/>
            <person name="Zhou J."/>
            <person name="Ni P."/>
            <person name="Dong W."/>
            <person name="Hu S."/>
            <person name="Zeng C."/>
            <person name="Zhang J."/>
            <person name="Zhang Y."/>
            <person name="Li R."/>
            <person name="Xu Z."/>
            <person name="Li S."/>
            <person name="Li X."/>
            <person name="Zheng H."/>
            <person name="Cong L."/>
            <person name="Lin L."/>
            <person name="Yin J."/>
            <person name="Geng J."/>
            <person name="Li G."/>
            <person name="Shi J."/>
            <person name="Liu J."/>
            <person name="Lv H."/>
            <person name="Li J."/>
            <person name="Wang J."/>
            <person name="Deng Y."/>
            <person name="Ran L."/>
            <person name="Shi X."/>
            <person name="Wang X."/>
            <person name="Wu Q."/>
            <person name="Li C."/>
            <person name="Ren X."/>
            <person name="Wang J."/>
            <person name="Wang X."/>
            <person name="Li D."/>
            <person name="Liu D."/>
            <person name="Zhang X."/>
            <person name="Ji Z."/>
            <person name="Zhao W."/>
            <person name="Sun Y."/>
            <person name="Zhang Z."/>
            <person name="Bao J."/>
            <person name="Han Y."/>
            <person name="Dong L."/>
            <person name="Ji J."/>
            <person name="Chen P."/>
            <person name="Wu S."/>
            <person name="Liu J."/>
            <person name="Xiao Y."/>
            <person name="Bu D."/>
            <person name="Tan J."/>
            <person name="Yang L."/>
            <person name="Ye C."/>
            <person name="Zhang J."/>
            <person name="Xu J."/>
            <person name="Zhou Y."/>
            <person name="Yu Y."/>
            <person name="Zhang B."/>
            <person name="Zhuang S."/>
            <person name="Wei H."/>
            <person name="Liu B."/>
            <person name="Lei M."/>
            <person name="Yu H."/>
            <person name="Li Y."/>
            <person name="Xu H."/>
            <person name="Wei S."/>
            <person name="He X."/>
            <person name="Fang L."/>
            <person name="Zhang Z."/>
            <person name="Zhang Y."/>
            <person name="Huang X."/>
            <person name="Su Z."/>
            <person name="Tong W."/>
            <person name="Li J."/>
            <person name="Tong Z."/>
            <person name="Li S."/>
            <person name="Ye J."/>
            <person name="Wang L."/>
            <person name="Fang L."/>
            <person name="Lei T."/>
            <person name="Chen C.-S."/>
            <person name="Chen H.-C."/>
            <person name="Xu Z."/>
            <person name="Li H."/>
            <person name="Huang H."/>
            <person name="Zhang F."/>
            <person name="Xu H."/>
            <person name="Li N."/>
            <person name="Zhao C."/>
            <person name="Li S."/>
            <person name="Dong L."/>
            <person name="Huang Y."/>
            <person name="Li L."/>
            <person name="Xi Y."/>
            <person name="Qi Q."/>
            <person name="Li W."/>
            <person name="Zhang B."/>
            <person name="Hu W."/>
            <person name="Zhang Y."/>
            <person name="Tian X."/>
            <person name="Jiao Y."/>
            <person name="Liang X."/>
            <person name="Jin J."/>
            <person name="Gao L."/>
            <person name="Zheng W."/>
            <person name="Hao B."/>
            <person name="Liu S.-M."/>
            <person name="Wang W."/>
            <person name="Yuan L."/>
            <person name="Cao M."/>
            <person name="McDermott J."/>
            <person name="Samudrala R."/>
            <person name="Wang J."/>
            <person name="Wong G.K.-S."/>
            <person name="Yang H."/>
        </authorList>
    </citation>
    <scope>NUCLEOTIDE SEQUENCE [LARGE SCALE GENOMIC DNA]</scope>
    <source>
        <strain>cv. Nipponbare</strain>
    </source>
</reference>
<reference key="6">
    <citation type="journal article" date="2003" name="Science">
        <title>Collection, mapping, and annotation of over 28,000 cDNA clones from japonica rice.</title>
        <authorList>
            <consortium name="The rice full-length cDNA consortium"/>
        </authorList>
    </citation>
    <scope>NUCLEOTIDE SEQUENCE [LARGE SCALE MRNA]</scope>
    <source>
        <strain>cv. Nipponbare</strain>
    </source>
</reference>
<reference key="7">
    <citation type="journal article" date="2008" name="Plant Signal. Behav.">
        <title>Role of OsPHR2 on phosphorus homeostasis and root hairs development in rice (Oryza sativa L.).</title>
        <authorList>
            <person name="Wu P."/>
            <person name="Wang X."/>
        </authorList>
    </citation>
    <scope>FUNCTION</scope>
</reference>
<reference key="8">
    <citation type="journal article" date="2010" name="Plant J.">
        <title>OsSPX1 suppresses the function of OsPHR2 in the regulation of expression of OsPT2 and phosphate homeostasis in shoots of rice.</title>
        <authorList>
            <person name="Liu F."/>
            <person name="Wang Z."/>
            <person name="Ren H."/>
            <person name="Shen C."/>
            <person name="Li Y."/>
            <person name="Ling H.Q."/>
            <person name="Wu C."/>
            <person name="Lian X."/>
            <person name="Wu P."/>
        </authorList>
    </citation>
    <scope>FUNCTION</scope>
</reference>
<reference key="9">
    <citation type="journal article" date="2014" name="Plant Cell">
        <title>SPX4 negatively regulates phosphate signaling and homeostasis through its interaction with PHR2 in Rice.</title>
        <authorList>
            <person name="Lv Q."/>
            <person name="Zhong Y."/>
            <person name="Wang Y."/>
            <person name="Wang Z."/>
            <person name="Zhang L."/>
            <person name="Shi J."/>
            <person name="Wu Z."/>
            <person name="Liu Y."/>
            <person name="Mao C."/>
            <person name="Yi K."/>
            <person name="Wu P."/>
        </authorList>
    </citation>
    <scope>FUNCTION</scope>
    <scope>INTERACTION WITH SPX4</scope>
    <scope>SUBCELLULAR LOCATION</scope>
</reference>
<reference key="10">
    <citation type="journal article" date="2014" name="Proc. Natl. Acad. Sci. U.S.A.">
        <title>Rice SPX1 and SPX2 inhibit phosphate starvation responses through interacting with PHR2 in a phosphate-dependent manner.</title>
        <authorList>
            <person name="Wang Z."/>
            <person name="Ruan W."/>
            <person name="Shi J."/>
            <person name="Zhang L."/>
            <person name="Xiang D."/>
            <person name="Yang C."/>
            <person name="Li C."/>
            <person name="Wu Z."/>
            <person name="Liu Y."/>
            <person name="Yu Y."/>
            <person name="Shou H."/>
            <person name="Mo X."/>
            <person name="Mao C."/>
            <person name="Wu P."/>
        </authorList>
    </citation>
    <scope>FUNCTION</scope>
    <scope>INTERACTION WITH SPX1 AND SPX2</scope>
</reference>
<reference key="11">
    <citation type="journal article" date="2015" name="Plant Mol. Biol.">
        <title>Genetic manipulation of a high-affinity PHR1 target cis-element to improve phosphorous uptake in Oryza sativa L.</title>
        <authorList>
            <person name="Ruan W."/>
            <person name="Guo M."/>
            <person name="Cai L."/>
            <person name="Hu H."/>
            <person name="Li C."/>
            <person name="Liu Y."/>
            <person name="Wu Z."/>
            <person name="Mao C."/>
            <person name="Yi K."/>
            <person name="Wu P."/>
            <person name="Mo X."/>
        </authorList>
    </citation>
    <scope>FUNCTION</scope>
</reference>
<reference key="12">
    <citation type="journal article" date="2015" name="Plant Physiol.">
        <title>Integrative Comparison of the Role of the PHOSPHATE RESPONSE1 Subfamily in Phosphate Signaling and Homeostasis in Rice.</title>
        <authorList>
            <person name="Guo M."/>
            <person name="Ruan W."/>
            <person name="Li C."/>
            <person name="Huang F."/>
            <person name="Zeng M."/>
            <person name="Liu Y."/>
            <person name="Yu Y."/>
            <person name="Ding X."/>
            <person name="Wu Y."/>
            <person name="Wu Z."/>
            <person name="Mao C."/>
            <person name="Yi K."/>
            <person name="Wu P."/>
            <person name="Mo X."/>
        </authorList>
    </citation>
    <scope>FUNCTION</scope>
    <scope>GENE FAMILY</scope>
    <scope>NOMENCLATURE</scope>
    <scope>DEVELOPMENTAL STAGE</scope>
    <scope>TISSUE SPECIFICITY</scope>
    <scope>LACK OF INDUCTION BY PHOSPHATE</scope>
</reference>
<reference key="13">
    <citation type="journal article" date="2016" name="Science">
        <title>Control of eukaryotic phosphate homeostasis by inositol polyphosphate sensor domains.</title>
        <authorList>
            <person name="Wild R."/>
            <person name="Gerasimaite R."/>
            <person name="Jung J.Y."/>
            <person name="Truffault V."/>
            <person name="Pavlovic I."/>
            <person name="Schmidt A."/>
            <person name="Saiardi A."/>
            <person name="Jessen H.J."/>
            <person name="Poirier Y."/>
            <person name="Hothorn M."/>
            <person name="Mayer A."/>
        </authorList>
    </citation>
    <scope>INTERACTION WITH SPX4</scope>
</reference>
<reference key="14">
    <citation type="journal article" date="2021" name="Mol. Plant">
        <title>Modulation of nitrate-induced phosphate response by the MYB transcription factor RLI1/HINGE1 in the nucleus.</title>
        <authorList>
            <person name="Zhang Z."/>
            <person name="Li Z."/>
            <person name="Wang W."/>
            <person name="Jiang Z."/>
            <person name="Guo L."/>
            <person name="Wang X."/>
            <person name="Qian Y."/>
            <person name="Huang X."/>
            <person name="Liu Y."/>
            <person name="Liu X."/>
            <person name="Qiu Y."/>
            <person name="Li A."/>
            <person name="Yan Y."/>
            <person name="Xie J."/>
            <person name="Cao S."/>
            <person name="Kopriva S."/>
            <person name="Li L."/>
            <person name="Kong F."/>
            <person name="Liu B."/>
            <person name="Wang Y."/>
            <person name="Hu B."/>
            <person name="Chu C."/>
        </authorList>
    </citation>
    <scope>FUNCTION</scope>
    <scope>DISRUPTION PHENOTYPE</scope>
    <source>
        <strain>cv. Hwayoung</strain>
        <strain>cv. Zhonghua 11</strain>
    </source>
</reference>
<reference key="15">
    <citation type="journal article" date="2022" name="Plant Cell">
        <title>Alternative splicing of REGULATOR OF LEAF INCLINATION 1 modulates phosphate starvation signaling and plant growth.</title>
        <authorList>
            <person name="Guo M."/>
            <person name="Zhang Y."/>
            <person name="Jia X."/>
            <person name="Wang X."/>
            <person name="Zhang Y."/>
            <person name="Liu J."/>
            <person name="Yang Q."/>
            <person name="Ruan W."/>
            <person name="Yi K."/>
        </authorList>
    </citation>
    <scope>FUNCTION</scope>
    <scope>DISRUPTION PHENOTYPE</scope>
    <scope>INTERACTION WITH RLI1; SPX1 AND SPX2</scope>
    <source>
        <strain>cv. Nipponbare</strain>
    </source>
</reference>
<feature type="chain" id="PRO_0000436715" description="Protein PHOSPHATE STARVATION RESPONSE 2">
    <location>
        <begin position="1"/>
        <end position="426"/>
    </location>
</feature>
<feature type="domain" description="HTH myb-type" evidence="1">
    <location>
        <begin position="243"/>
        <end position="303"/>
    </location>
</feature>
<feature type="DNA-binding region" description="H-T-H motif" evidence="1">
    <location>
        <begin position="274"/>
        <end position="299"/>
    </location>
</feature>
<feature type="region of interest" description="Disordered" evidence="2">
    <location>
        <begin position="27"/>
        <end position="81"/>
    </location>
</feature>
<feature type="region of interest" description="Disordered" evidence="2">
    <location>
        <begin position="96"/>
        <end position="123"/>
    </location>
</feature>
<feature type="region of interest" description="Disordered" evidence="2">
    <location>
        <begin position="198"/>
        <end position="247"/>
    </location>
</feature>
<feature type="region of interest" description="Disordered" evidence="2">
    <location>
        <begin position="302"/>
        <end position="326"/>
    </location>
</feature>
<feature type="region of interest" description="Disordered" evidence="2">
    <location>
        <begin position="382"/>
        <end position="426"/>
    </location>
</feature>
<feature type="compositionally biased region" description="Polar residues" evidence="2">
    <location>
        <begin position="69"/>
        <end position="81"/>
    </location>
</feature>
<feature type="compositionally biased region" description="Low complexity" evidence="2">
    <location>
        <begin position="102"/>
        <end position="119"/>
    </location>
</feature>
<feature type="compositionally biased region" description="Low complexity" evidence="2">
    <location>
        <begin position="205"/>
        <end position="225"/>
    </location>
</feature>
<feature type="compositionally biased region" description="Polar residues" evidence="2">
    <location>
        <begin position="237"/>
        <end position="246"/>
    </location>
</feature>
<feature type="compositionally biased region" description="Basic and acidic residues" evidence="2">
    <location>
        <begin position="303"/>
        <end position="322"/>
    </location>
</feature>
<feature type="compositionally biased region" description="Polar residues" evidence="2">
    <location>
        <begin position="387"/>
        <end position="401"/>
    </location>
</feature>
<feature type="compositionally biased region" description="Polar residues" evidence="2">
    <location>
        <begin position="411"/>
        <end position="426"/>
    </location>
</feature>
<feature type="helix" evidence="19">
    <location>
        <begin position="253"/>
        <end position="265"/>
    </location>
</feature>
<feature type="turn" evidence="19">
    <location>
        <begin position="269"/>
        <end position="271"/>
    </location>
</feature>
<feature type="helix" evidence="19">
    <location>
        <begin position="274"/>
        <end position="281"/>
    </location>
</feature>
<feature type="helix" evidence="19">
    <location>
        <begin position="288"/>
        <end position="301"/>
    </location>
</feature>
<feature type="helix" evidence="18">
    <location>
        <begin position="305"/>
        <end position="307"/>
    </location>
</feature>
<feature type="helix" evidence="19">
    <location>
        <begin position="331"/>
        <end position="374"/>
    </location>
</feature>
<comment type="function">
    <text evidence="3 4 5 6 7 8 9 11 12">Transcription factor involved in phosphate starvation signaling (PubMed:18263782, PubMed:26082401). Binds to P1BS, an imperfect palindromic sequence 5'-GNATATNC-3', to promote the expression of inorganic phosphate (Pi) starvation-responsive genes (PubMed:25657119, PubMed:26082401). Functionally redundant with PHR1 and PHR3 in regulating Pi starvation response and Pi homeostasis (PubMed:26082401). Involved in both systematic and local Pi-signaling pathways (PubMed:19704822). Regulates several Pi transporters (PubMed:18263782). Regulates the expression of PT2 (PubMed:20149131). Directly up-regulates SPX1 and SPX2 expression, but PHR2 binding to DNA is repressed redundantly by SPX1 and SPX2 in a PI-dependent manner (PubMed:25271318). The DNA-binding activity is also repressed by SPX4 (PubMed:24692424). Involved in root growth under Pi deprivation (PubMed:18263782). Involved in the modulation of Pi response and homeostasis together with RLI1; promotes RLI1 expression in response to nitrate availability, thus triggering the nitrate-induced phosphate response (NIPR) (PubMed:33316467, PubMed:35640569).</text>
</comment>
<comment type="subunit">
    <text evidence="6 7 10 12">Interacts (via C-terminus) with SPX4 (via N-terminus) in the presence of inositol polyphosphate (PubMed:24692424, PubMed:27080106). Interacts (via C-terminus) with SPX1 and SPX2 (via SPX domain) (PubMed:25271318, PubMed:35640569). Interacts with RLI1 isoform RLI1b in the nucleus (PubMed:35640569).</text>
</comment>
<comment type="subcellular location">
    <subcellularLocation>
        <location evidence="3 6">Nucleus</location>
    </subcellularLocation>
    <subcellularLocation>
        <location evidence="6">Cytoplasm</location>
    </subcellularLocation>
    <text evidence="6">Interaction with SPX4 trap PHR2 within the cytoplasm and affects the nuclear localization.</text>
</comment>
<comment type="tissue specificity">
    <text evidence="3 9">Expressed in roots, stems, leaves and fruits (PubMed:18263782). Expressed in the root cap and in the exodermis, sclerenchyma and vascular tissues of the root, in the cortex cells and the stele of lateral roots, in the mesophyll cells of the leaf, in pollen, vascular cylinder of the anther and the veins of the lemma, palea and pistils, and in all node I tissues (PubMed:26082401).</text>
</comment>
<comment type="developmental stage">
    <text evidence="9">Expressed throughout all stages of plant growth.</text>
</comment>
<comment type="induction">
    <text evidence="3 9">Not regulated by Pi starvation.</text>
</comment>
<comment type="disruption phenotype">
    <text evidence="11 12">Repressed nitrate induction of phosphate (Pi) uptake activity (PubMed:33316467). Reduced biomass under Pi starvation; this phenotype is aggravated by the loss of both RLI1 and PHR2 and is associated with leaf senescence symptoms and lower Pi concentration (PubMed:35640569).</text>
</comment>
<comment type="sequence caution" evidence="14">
    <conflict type="erroneous gene model prediction">
        <sequence resource="EMBL-CDS" id="EEE67078"/>
    </conflict>
</comment>
<dbReference type="EMBL" id="AP005101">
    <property type="protein sequence ID" value="BAD30836.1"/>
    <property type="molecule type" value="Genomic_DNA"/>
</dbReference>
<dbReference type="EMBL" id="AP005451">
    <property type="protein sequence ID" value="BAC84294.1"/>
    <property type="molecule type" value="Genomic_DNA"/>
</dbReference>
<dbReference type="EMBL" id="AP008213">
    <property type="protein sequence ID" value="BAF21429.2"/>
    <property type="molecule type" value="Genomic_DNA"/>
</dbReference>
<dbReference type="EMBL" id="AP014963">
    <property type="protein sequence ID" value="BAT01257.1"/>
    <property type="molecule type" value="Genomic_DNA"/>
</dbReference>
<dbReference type="EMBL" id="CM000144">
    <property type="protein sequence ID" value="EEE67078.1"/>
    <property type="status" value="ALT_SEQ"/>
    <property type="molecule type" value="Genomic_DNA"/>
</dbReference>
<dbReference type="EMBL" id="AK100065">
    <property type="protein sequence ID" value="BAG94425.1"/>
    <property type="molecule type" value="mRNA"/>
</dbReference>
<dbReference type="RefSeq" id="NP_001389986.1">
    <property type="nucleotide sequence ID" value="NM_001403057.1"/>
</dbReference>
<dbReference type="RefSeq" id="XP_015647735.1">
    <property type="nucleotide sequence ID" value="XM_015792249.1"/>
</dbReference>
<dbReference type="RefSeq" id="XP_015647736.1">
    <property type="nucleotide sequence ID" value="XM_015792250.1"/>
</dbReference>
<dbReference type="PDB" id="7D3Y">
    <property type="method" value="X-ray"/>
    <property type="resolution" value="3.11 A"/>
    <property type="chains" value="C/D/E=225-362"/>
</dbReference>
<dbReference type="PDB" id="7E40">
    <property type="method" value="X-ray"/>
    <property type="resolution" value="2.60 A"/>
    <property type="chains" value="A/C=248-380"/>
</dbReference>
<dbReference type="PDBsum" id="7D3Y"/>
<dbReference type="PDBsum" id="7E40"/>
<dbReference type="SMR" id="Q6Z156"/>
<dbReference type="FunCoup" id="Q6Z156">
    <property type="interactions" value="1502"/>
</dbReference>
<dbReference type="STRING" id="39947.Q6Z156"/>
<dbReference type="PaxDb" id="39947-Q6Z156"/>
<dbReference type="EnsemblPlants" id="Os07t0438800-01">
    <property type="protein sequence ID" value="Os07t0438800-01"/>
    <property type="gene ID" value="Os07g0438800"/>
</dbReference>
<dbReference type="GeneID" id="4343086"/>
<dbReference type="Gramene" id="Os07t0438800-01">
    <property type="protein sequence ID" value="Os07t0438800-01"/>
    <property type="gene ID" value="Os07g0438800"/>
</dbReference>
<dbReference type="KEGG" id="dosa:Os07g0438800"/>
<dbReference type="eggNOG" id="ENOG502QXMH">
    <property type="taxonomic scope" value="Eukaryota"/>
</dbReference>
<dbReference type="HOGENOM" id="CLU_044541_2_1_1"/>
<dbReference type="InParanoid" id="Q6Z156"/>
<dbReference type="OMA" id="NNDSSWC"/>
<dbReference type="OrthoDB" id="551907at2759"/>
<dbReference type="Proteomes" id="UP000000763">
    <property type="component" value="Chromosome 7"/>
</dbReference>
<dbReference type="Proteomes" id="UP000007752">
    <property type="component" value="Chromosome 7"/>
</dbReference>
<dbReference type="Proteomes" id="UP000059680">
    <property type="component" value="Chromosome 7"/>
</dbReference>
<dbReference type="ExpressionAtlas" id="Q6Z156">
    <property type="expression patterns" value="baseline and differential"/>
</dbReference>
<dbReference type="GO" id="GO:0005737">
    <property type="term" value="C:cytoplasm"/>
    <property type="evidence" value="ECO:0007669"/>
    <property type="project" value="UniProtKB-SubCell"/>
</dbReference>
<dbReference type="GO" id="GO:0005634">
    <property type="term" value="C:nucleus"/>
    <property type="evidence" value="ECO:0007669"/>
    <property type="project" value="UniProtKB-SubCell"/>
</dbReference>
<dbReference type="GO" id="GO:0003677">
    <property type="term" value="F:DNA binding"/>
    <property type="evidence" value="ECO:0007669"/>
    <property type="project" value="UniProtKB-KW"/>
</dbReference>
<dbReference type="GO" id="GO:0003700">
    <property type="term" value="F:DNA-binding transcription factor activity"/>
    <property type="evidence" value="ECO:0007669"/>
    <property type="project" value="InterPro"/>
</dbReference>
<dbReference type="GO" id="GO:0016036">
    <property type="term" value="P:cellular response to phosphate starvation"/>
    <property type="evidence" value="ECO:0000315"/>
    <property type="project" value="UniProtKB"/>
</dbReference>
<dbReference type="GO" id="GO:0010966">
    <property type="term" value="P:regulation of phosphate transport"/>
    <property type="evidence" value="ECO:0000315"/>
    <property type="project" value="UniProtKB"/>
</dbReference>
<dbReference type="GO" id="GO:0010167">
    <property type="term" value="P:response to nitrate"/>
    <property type="evidence" value="ECO:0000315"/>
    <property type="project" value="UniProtKB"/>
</dbReference>
<dbReference type="FunFam" id="1.10.10.60:FF:000002">
    <property type="entry name" value="Myb family transcription factor"/>
    <property type="match status" value="1"/>
</dbReference>
<dbReference type="Gene3D" id="1.10.10.60">
    <property type="entry name" value="Homeodomain-like"/>
    <property type="match status" value="1"/>
</dbReference>
<dbReference type="InterPro" id="IPR009057">
    <property type="entry name" value="Homeodomain-like_sf"/>
</dbReference>
<dbReference type="InterPro" id="IPR025756">
    <property type="entry name" value="Myb_CC_LHEQLE"/>
</dbReference>
<dbReference type="InterPro" id="IPR017930">
    <property type="entry name" value="Myb_dom"/>
</dbReference>
<dbReference type="InterPro" id="IPR006447">
    <property type="entry name" value="Myb_dom_plants"/>
</dbReference>
<dbReference type="InterPro" id="IPR046955">
    <property type="entry name" value="PHR1-like"/>
</dbReference>
<dbReference type="InterPro" id="IPR001005">
    <property type="entry name" value="SANT/Myb"/>
</dbReference>
<dbReference type="NCBIfam" id="TIGR01557">
    <property type="entry name" value="myb_SHAQKYF"/>
    <property type="match status" value="1"/>
</dbReference>
<dbReference type="PANTHER" id="PTHR31499:SF80">
    <property type="entry name" value="HTH MYB-TYPE DOMAIN-CONTAINING PROTEIN"/>
    <property type="match status" value="1"/>
</dbReference>
<dbReference type="PANTHER" id="PTHR31499">
    <property type="entry name" value="MYB FAMILY TRANSCRIPTION FACTOR PHL11"/>
    <property type="match status" value="1"/>
</dbReference>
<dbReference type="Pfam" id="PF14379">
    <property type="entry name" value="Myb_CC_LHEQLE"/>
    <property type="match status" value="1"/>
</dbReference>
<dbReference type="Pfam" id="PF00249">
    <property type="entry name" value="Myb_DNA-binding"/>
    <property type="match status" value="1"/>
</dbReference>
<dbReference type="SUPFAM" id="SSF46689">
    <property type="entry name" value="Homeodomain-like"/>
    <property type="match status" value="1"/>
</dbReference>
<dbReference type="PROSITE" id="PS51294">
    <property type="entry name" value="HTH_MYB"/>
    <property type="match status" value="1"/>
</dbReference>
<name>PHR2_ORYSJ</name>
<proteinExistence type="evidence at protein level"/>